<sequence length="302" mass="32047">MIFMGSTETVLSVLVLVLLGYILKVLGVLGEEDASTLNRVVINVAIPSLIFTSLYRADLSGISDLVLIPVICMITGTLSGTIAYLWARRRGLDSGKTWGLTVAAAMMNSGFLGYPVTAGIFGSEGLVRAIFYDTGTTLMFTSLGLLLSHISGGEGSRIMKRAVFFPPLWAFLLGVIFNLWGLPTGIAGTILGYLSGAAVPLIMISLGLTLNFRFLRHSVADATLVSGLRLLISPLMAAGISYVLAFRGLNFSVTVLEASMPSAMLAAVLAIENDLDVDLVSSCIFMSTILSLVSLPLWSVVL</sequence>
<gene>
    <name type="ordered locus">MTH_1382</name>
</gene>
<name>Y1382_METTH</name>
<dbReference type="EMBL" id="AE000666">
    <property type="protein sequence ID" value="AAB85859.1"/>
    <property type="molecule type" value="Genomic_DNA"/>
</dbReference>
<dbReference type="PIR" id="H69050">
    <property type="entry name" value="H69050"/>
</dbReference>
<dbReference type="SMR" id="O27435"/>
<dbReference type="STRING" id="187420.MTH_1382"/>
<dbReference type="TCDB" id="2.A.69.4.3">
    <property type="family name" value="the auxin efflux carrier (aec) family"/>
</dbReference>
<dbReference type="PaxDb" id="187420-MTH_1382"/>
<dbReference type="EnsemblBacteria" id="AAB85859">
    <property type="protein sequence ID" value="AAB85859"/>
    <property type="gene ID" value="MTH_1382"/>
</dbReference>
<dbReference type="KEGG" id="mth:MTH_1382"/>
<dbReference type="HOGENOM" id="CLU_056175_5_2_2"/>
<dbReference type="InParanoid" id="O27435"/>
<dbReference type="Proteomes" id="UP000005223">
    <property type="component" value="Chromosome"/>
</dbReference>
<dbReference type="GO" id="GO:0005886">
    <property type="term" value="C:plasma membrane"/>
    <property type="evidence" value="ECO:0007669"/>
    <property type="project" value="UniProtKB-SubCell"/>
</dbReference>
<dbReference type="GO" id="GO:0055085">
    <property type="term" value="P:transmembrane transport"/>
    <property type="evidence" value="ECO:0007669"/>
    <property type="project" value="InterPro"/>
</dbReference>
<dbReference type="Gene3D" id="1.20.1530.20">
    <property type="match status" value="1"/>
</dbReference>
<dbReference type="InterPro" id="IPR014024">
    <property type="entry name" value="Auxin_eff_plant"/>
</dbReference>
<dbReference type="InterPro" id="IPR004776">
    <property type="entry name" value="Mem_transp_PIN-like"/>
</dbReference>
<dbReference type="InterPro" id="IPR038770">
    <property type="entry name" value="Na+/solute_symporter_sf"/>
</dbReference>
<dbReference type="NCBIfam" id="TIGR00946">
    <property type="entry name" value="2a69"/>
    <property type="match status" value="1"/>
</dbReference>
<dbReference type="PANTHER" id="PTHR36838">
    <property type="entry name" value="AUXIN EFFLUX CARRIER FAMILY PROTEIN"/>
    <property type="match status" value="1"/>
</dbReference>
<dbReference type="PANTHER" id="PTHR36838:SF3">
    <property type="entry name" value="TRANSPORTER AUXIN EFFLUX CARRIER EC FAMILY"/>
    <property type="match status" value="1"/>
</dbReference>
<dbReference type="Pfam" id="PF03547">
    <property type="entry name" value="Mem_trans"/>
    <property type="match status" value="2"/>
</dbReference>
<protein>
    <recommendedName>
        <fullName>Uncharacterized transporter MTH_1382</fullName>
    </recommendedName>
</protein>
<evidence type="ECO:0000255" key="1"/>
<evidence type="ECO:0000305" key="2"/>
<accession>O27435</accession>
<organism>
    <name type="scientific">Methanothermobacter thermautotrophicus (strain ATCC 29096 / DSM 1053 / JCM 10044 / NBRC 100330 / Delta H)</name>
    <name type="common">Methanobacterium thermoautotrophicum</name>
    <dbReference type="NCBI Taxonomy" id="187420"/>
    <lineage>
        <taxon>Archaea</taxon>
        <taxon>Methanobacteriati</taxon>
        <taxon>Methanobacteriota</taxon>
        <taxon>Methanomada group</taxon>
        <taxon>Methanobacteria</taxon>
        <taxon>Methanobacteriales</taxon>
        <taxon>Methanobacteriaceae</taxon>
        <taxon>Methanothermobacter</taxon>
    </lineage>
</organism>
<proteinExistence type="inferred from homology"/>
<feature type="chain" id="PRO_0000123804" description="Uncharacterized transporter MTH_1382">
    <location>
        <begin position="1"/>
        <end position="302"/>
    </location>
</feature>
<feature type="transmembrane region" description="Helical" evidence="1">
    <location>
        <begin position="10"/>
        <end position="30"/>
    </location>
</feature>
<feature type="transmembrane region" description="Helical" evidence="1">
    <location>
        <begin position="65"/>
        <end position="85"/>
    </location>
</feature>
<feature type="transmembrane region" description="Helical" evidence="1">
    <location>
        <begin position="102"/>
        <end position="122"/>
    </location>
</feature>
<feature type="transmembrane region" description="Helical" evidence="1">
    <location>
        <begin position="130"/>
        <end position="150"/>
    </location>
</feature>
<feature type="transmembrane region" description="Helical" evidence="1">
    <location>
        <begin position="162"/>
        <end position="182"/>
    </location>
</feature>
<feature type="transmembrane region" description="Helical" evidence="1">
    <location>
        <begin position="190"/>
        <end position="210"/>
    </location>
</feature>
<feature type="transmembrane region" description="Helical" evidence="1">
    <location>
        <begin position="224"/>
        <end position="244"/>
    </location>
</feature>
<feature type="transmembrane region" description="Helical" evidence="1">
    <location>
        <begin position="251"/>
        <end position="271"/>
    </location>
</feature>
<feature type="transmembrane region" description="Helical" evidence="1">
    <location>
        <begin position="282"/>
        <end position="302"/>
    </location>
</feature>
<comment type="subcellular location">
    <subcellularLocation>
        <location evidence="2">Cell membrane</location>
        <topology evidence="2">Multi-pass membrane protein</topology>
    </subcellularLocation>
</comment>
<comment type="similarity">
    <text evidence="2">Belongs to the auxin efflux carrier (TC 2.A.69) family.</text>
</comment>
<reference key="1">
    <citation type="journal article" date="1997" name="J. Bacteriol.">
        <title>Complete genome sequence of Methanobacterium thermoautotrophicum deltaH: functional analysis and comparative genomics.</title>
        <authorList>
            <person name="Smith D.R."/>
            <person name="Doucette-Stamm L.A."/>
            <person name="Deloughery C."/>
            <person name="Lee H.-M."/>
            <person name="Dubois J."/>
            <person name="Aldredge T."/>
            <person name="Bashirzadeh R."/>
            <person name="Blakely D."/>
            <person name="Cook R."/>
            <person name="Gilbert K."/>
            <person name="Harrison D."/>
            <person name="Hoang L."/>
            <person name="Keagle P."/>
            <person name="Lumm W."/>
            <person name="Pothier B."/>
            <person name="Qiu D."/>
            <person name="Spadafora R."/>
            <person name="Vicare R."/>
            <person name="Wang Y."/>
            <person name="Wierzbowski J."/>
            <person name="Gibson R."/>
            <person name="Jiwani N."/>
            <person name="Caruso A."/>
            <person name="Bush D."/>
            <person name="Safer H."/>
            <person name="Patwell D."/>
            <person name="Prabhakar S."/>
            <person name="McDougall S."/>
            <person name="Shimer G."/>
            <person name="Goyal A."/>
            <person name="Pietrovski S."/>
            <person name="Church G.M."/>
            <person name="Daniels C.J."/>
            <person name="Mao J.-I."/>
            <person name="Rice P."/>
            <person name="Noelling J."/>
            <person name="Reeve J.N."/>
        </authorList>
    </citation>
    <scope>NUCLEOTIDE SEQUENCE [LARGE SCALE GENOMIC DNA]</scope>
    <source>
        <strain>ATCC 29096 / DSM 1053 / JCM 10044 / NBRC 100330 / Delta H</strain>
    </source>
</reference>
<keyword id="KW-1003">Cell membrane</keyword>
<keyword id="KW-0472">Membrane</keyword>
<keyword id="KW-1185">Reference proteome</keyword>
<keyword id="KW-0812">Transmembrane</keyword>
<keyword id="KW-1133">Transmembrane helix</keyword>
<keyword id="KW-0813">Transport</keyword>